<feature type="chain" id="PRO_1000067047" description="Aliphatic amidase">
    <location>
        <begin position="1"/>
        <end position="339"/>
    </location>
</feature>
<feature type="domain" description="CN hydrolase" evidence="2">
    <location>
        <begin position="13"/>
        <end position="259"/>
    </location>
</feature>
<feature type="active site" description="Proton acceptor" evidence="1">
    <location>
        <position position="59"/>
    </location>
</feature>
<feature type="active site" description="Proton donor" evidence="1">
    <location>
        <position position="133"/>
    </location>
</feature>
<feature type="active site" description="Nucleophile" evidence="1">
    <location>
        <position position="165"/>
    </location>
</feature>
<protein>
    <recommendedName>
        <fullName evidence="1">Aliphatic amidase</fullName>
        <ecNumber evidence="1">3.5.1.4</ecNumber>
    </recommendedName>
    <alternativeName>
        <fullName evidence="1">Acylamide amidohydrolase</fullName>
    </alternativeName>
</protein>
<dbReference type="EC" id="3.5.1.4" evidence="1"/>
<dbReference type="EMBL" id="AM260522">
    <property type="protein sequence ID" value="CAJ99374.1"/>
    <property type="molecule type" value="Genomic_DNA"/>
</dbReference>
<dbReference type="RefSeq" id="WP_011577488.1">
    <property type="nucleotide sequence ID" value="NC_008229.1"/>
</dbReference>
<dbReference type="SMR" id="Q17YA2"/>
<dbReference type="STRING" id="382638.Hac_0554"/>
<dbReference type="GeneID" id="31758035"/>
<dbReference type="KEGG" id="hac:Hac_0554"/>
<dbReference type="eggNOG" id="COG0388">
    <property type="taxonomic scope" value="Bacteria"/>
</dbReference>
<dbReference type="HOGENOM" id="CLU_071797_0_0_7"/>
<dbReference type="OrthoDB" id="9811121at2"/>
<dbReference type="BioCyc" id="HACI382638:HAC_RS02455-MONOMER"/>
<dbReference type="Proteomes" id="UP000000775">
    <property type="component" value="Chromosome"/>
</dbReference>
<dbReference type="GO" id="GO:0004040">
    <property type="term" value="F:amidase activity"/>
    <property type="evidence" value="ECO:0007669"/>
    <property type="project" value="UniProtKB-UniRule"/>
</dbReference>
<dbReference type="CDD" id="cd07565">
    <property type="entry name" value="aliphatic_amidase"/>
    <property type="match status" value="1"/>
</dbReference>
<dbReference type="FunFam" id="3.60.110.10:FF:000014">
    <property type="entry name" value="Aliphatic amidase"/>
    <property type="match status" value="1"/>
</dbReference>
<dbReference type="Gene3D" id="3.60.110.10">
    <property type="entry name" value="Carbon-nitrogen hydrolase"/>
    <property type="match status" value="1"/>
</dbReference>
<dbReference type="HAMAP" id="MF_01242">
    <property type="entry name" value="Aliphatic_amidase"/>
    <property type="match status" value="1"/>
</dbReference>
<dbReference type="InterPro" id="IPR050345">
    <property type="entry name" value="Aliph_Amidase/BUP"/>
</dbReference>
<dbReference type="InterPro" id="IPR023719">
    <property type="entry name" value="Aliphatic_amidase"/>
</dbReference>
<dbReference type="InterPro" id="IPR003010">
    <property type="entry name" value="C-N_Hydrolase"/>
</dbReference>
<dbReference type="InterPro" id="IPR036526">
    <property type="entry name" value="C-N_Hydrolase_sf"/>
</dbReference>
<dbReference type="NCBIfam" id="NF009802">
    <property type="entry name" value="PRK13286.1"/>
    <property type="match status" value="1"/>
</dbReference>
<dbReference type="PANTHER" id="PTHR43674:SF14">
    <property type="entry name" value="ALIPHATIC AMIDASE"/>
    <property type="match status" value="1"/>
</dbReference>
<dbReference type="PANTHER" id="PTHR43674">
    <property type="entry name" value="NITRILASE C965.09-RELATED"/>
    <property type="match status" value="1"/>
</dbReference>
<dbReference type="Pfam" id="PF00795">
    <property type="entry name" value="CN_hydrolase"/>
    <property type="match status" value="1"/>
</dbReference>
<dbReference type="SUPFAM" id="SSF56317">
    <property type="entry name" value="Carbon-nitrogen hydrolase"/>
    <property type="match status" value="1"/>
</dbReference>
<dbReference type="PROSITE" id="PS50263">
    <property type="entry name" value="CN_HYDROLASE"/>
    <property type="match status" value="1"/>
</dbReference>
<accession>Q17YA2</accession>
<reference key="1">
    <citation type="journal article" date="2006" name="PLoS Genet.">
        <title>Who ate whom? Adaptive Helicobacter genomic changes that accompanied a host jump from early humans to large felines.</title>
        <authorList>
            <person name="Eppinger M."/>
            <person name="Baar C."/>
            <person name="Linz B."/>
            <person name="Raddatz G."/>
            <person name="Lanz C."/>
            <person name="Keller H."/>
            <person name="Morelli G."/>
            <person name="Gressmann H."/>
            <person name="Achtman M."/>
            <person name="Schuster S.C."/>
        </authorList>
    </citation>
    <scope>NUCLEOTIDE SEQUENCE [LARGE SCALE GENOMIC DNA]</scope>
    <source>
        <strain>Sheeba</strain>
    </source>
</reference>
<comment type="function">
    <text evidence="1">Catalyzes the hydrolysis of short-chain aliphatic amides to their corresponding organic acids with release of ammonia.</text>
</comment>
<comment type="function">
    <text evidence="1">Also exhibits in vitro acyl transferase activity, transferring the acyl moiety of short-chain amides to hydroxylamine to form hydroxamates.</text>
</comment>
<comment type="catalytic activity">
    <reaction evidence="1">
        <text>a monocarboxylic acid amide + H2O = a monocarboxylate + NH4(+)</text>
        <dbReference type="Rhea" id="RHEA:12020"/>
        <dbReference type="ChEBI" id="CHEBI:15377"/>
        <dbReference type="ChEBI" id="CHEBI:28938"/>
        <dbReference type="ChEBI" id="CHEBI:35757"/>
        <dbReference type="ChEBI" id="CHEBI:83628"/>
        <dbReference type="EC" id="3.5.1.4"/>
    </reaction>
</comment>
<comment type="similarity">
    <text evidence="1">Belongs to the carbon-nitrogen hydrolase superfamily. Aliphatic amidase family.</text>
</comment>
<evidence type="ECO:0000255" key="1">
    <source>
        <dbReference type="HAMAP-Rule" id="MF_01242"/>
    </source>
</evidence>
<evidence type="ECO:0000255" key="2">
    <source>
        <dbReference type="PROSITE-ProRule" id="PRU00054"/>
    </source>
</evidence>
<keyword id="KW-0378">Hydrolase</keyword>
<organism>
    <name type="scientific">Helicobacter acinonychis (strain Sheeba)</name>
    <dbReference type="NCBI Taxonomy" id="382638"/>
    <lineage>
        <taxon>Bacteria</taxon>
        <taxon>Pseudomonadati</taxon>
        <taxon>Campylobacterota</taxon>
        <taxon>Epsilonproteobacteria</taxon>
        <taxon>Campylobacterales</taxon>
        <taxon>Helicobacteraceae</taxon>
        <taxon>Helicobacter</taxon>
    </lineage>
</organism>
<sequence>MRHGDISSSPDTVGVAVVNYKMPRLHTKEQVLENCRNIAKVIGGVKQGLPGLDLIIFPEYSTHGIMYDKQEMFDTAVSIPGEETAILAEACKKNKVWGVFSLTGEKHEQAKKNPYNTLILVNDKGEIVQKYRKILPWCPIECWYPGDKTYVVDGPKGLKVSLIICDDGNYPEIWRDCAMRGAELIVRCQGYMYPAKEQQIAIVKAMAWANQCYVAVANATGFDGVYSYFGHSSIIGFDGHTLGECGEEENGIQYAQLSVQQIRDARKYDQSQNQLFKLLHRGYSGVFASGDGDKGVAECPFEFYKTWVNDPKKAQENVEKFTRPSVGVAACPVGDLPTK</sequence>
<gene>
    <name evidence="1" type="primary">amiE</name>
    <name type="ordered locus">Hac_0554</name>
</gene>
<name>AMIE_HELAH</name>
<proteinExistence type="inferred from homology"/>